<reference key="1">
    <citation type="journal article" date="1990" name="Virology">
        <title>The complete DNA sequence of vaccinia virus.</title>
        <authorList>
            <person name="Goebel S.J."/>
            <person name="Johnson G.P."/>
            <person name="Perkus M.E."/>
            <person name="Davis S.W."/>
            <person name="Winslow J.P."/>
            <person name="Paoletti E."/>
        </authorList>
    </citation>
    <scope>NUCLEOTIDE SEQUENCE [LARGE SCALE GENOMIC DNA]</scope>
</reference>
<reference key="2">
    <citation type="journal article" date="1990" name="Virology">
        <title>Appendix to 'The complete DNA sequence of vaccinia virus'.</title>
        <authorList>
            <person name="Goebel S.J."/>
            <person name="Johnson G.P."/>
            <person name="Perkus M.E."/>
            <person name="Davis S.W."/>
            <person name="Winslow J.P."/>
            <person name="Paoletti E."/>
        </authorList>
    </citation>
    <scope>NUCLEOTIDE SEQUENCE [LARGE SCALE GENOMIC DNA]</scope>
</reference>
<organismHost>
    <name type="scientific">Homo sapiens</name>
    <name type="common">Human</name>
    <dbReference type="NCBI Taxonomy" id="9606"/>
</organismHost>
<feature type="chain" id="PRO_0000187231" description="Ribonucleoside-diphosphate reductase large subunit">
    <location>
        <begin position="1"/>
        <end position="771"/>
    </location>
</feature>
<feature type="domain" description="ATP-cone" evidence="5">
    <location>
        <begin position="1"/>
        <end position="92"/>
    </location>
</feature>
<feature type="active site" description="Proton acceptor" evidence="3">
    <location>
        <position position="427"/>
    </location>
</feature>
<feature type="active site" description="Cysteine radical intermediate" evidence="3">
    <location>
        <position position="429"/>
    </location>
</feature>
<feature type="active site" description="Proton acceptor" evidence="3">
    <location>
        <position position="431"/>
    </location>
</feature>
<feature type="binding site" evidence="4">
    <location>
        <begin position="5"/>
        <end position="6"/>
    </location>
    <ligand>
        <name>ATP</name>
        <dbReference type="ChEBI" id="CHEBI:30616"/>
        <note>allosteric activator</note>
    </ligand>
</feature>
<feature type="binding site" evidence="4">
    <location>
        <begin position="11"/>
        <end position="17"/>
    </location>
    <ligand>
        <name>ATP</name>
        <dbReference type="ChEBI" id="CHEBI:30616"/>
        <note>allosteric activator</note>
    </ligand>
</feature>
<feature type="binding site" evidence="4">
    <location>
        <position position="53"/>
    </location>
    <ligand>
        <name>ATP</name>
        <dbReference type="ChEBI" id="CHEBI:30616"/>
        <note>allosteric activator</note>
    </ligand>
</feature>
<feature type="binding site" evidence="4">
    <location>
        <position position="57"/>
    </location>
    <ligand>
        <name>ATP</name>
        <dbReference type="ChEBI" id="CHEBI:30616"/>
        <note>allosteric activator</note>
    </ligand>
</feature>
<feature type="binding site" evidence="1">
    <location>
        <position position="88"/>
    </location>
    <ligand>
        <name>ATP</name>
        <dbReference type="ChEBI" id="CHEBI:30616"/>
        <note>allosteric activator</note>
    </ligand>
</feature>
<feature type="binding site" evidence="4">
    <location>
        <position position="202"/>
    </location>
    <ligand>
        <name>GDP</name>
        <dbReference type="ChEBI" id="CHEBI:58189"/>
    </ligand>
</feature>
<feature type="binding site" evidence="4">
    <location>
        <position position="217"/>
    </location>
    <ligand>
        <name>GDP</name>
        <dbReference type="ChEBI" id="CHEBI:58189"/>
    </ligand>
</feature>
<feature type="binding site" evidence="4">
    <location>
        <begin position="226"/>
        <end position="228"/>
    </location>
    <ligand>
        <name>dTTP</name>
        <dbReference type="ChEBI" id="CHEBI:37568"/>
        <note>allosteric effector that controls substrate specificity</note>
    </ligand>
</feature>
<feature type="binding site" evidence="4">
    <location>
        <position position="243"/>
    </location>
    <ligand>
        <name>dTTP</name>
        <dbReference type="ChEBI" id="CHEBI:37568"/>
        <note>allosteric effector that controls substrate specificity</note>
    </ligand>
</feature>
<feature type="binding site" evidence="4">
    <location>
        <position position="256"/>
    </location>
    <ligand>
        <name>dTTP</name>
        <dbReference type="ChEBI" id="CHEBI:37568"/>
        <note>allosteric effector that controls substrate specificity</note>
    </ligand>
</feature>
<feature type="binding site" evidence="4">
    <location>
        <position position="427"/>
    </location>
    <ligand>
        <name>GDP</name>
        <dbReference type="ChEBI" id="CHEBI:58189"/>
    </ligand>
</feature>
<feature type="binding site" evidence="4">
    <location>
        <position position="431"/>
    </location>
    <ligand>
        <name>GDP</name>
        <dbReference type="ChEBI" id="CHEBI:58189"/>
    </ligand>
</feature>
<feature type="binding site" evidence="4">
    <location>
        <begin position="603"/>
        <end position="606"/>
    </location>
    <ligand>
        <name>GDP</name>
        <dbReference type="ChEBI" id="CHEBI:58189"/>
    </ligand>
</feature>
<protein>
    <recommendedName>
        <fullName>Ribonucleoside-diphosphate reductase large subunit</fullName>
        <ecNumber>1.17.4.1</ecNumber>
    </recommendedName>
    <alternativeName>
        <fullName>Ribonucleotide reductase large subunit</fullName>
    </alternativeName>
    <alternativeName>
        <fullName>Ribonucleotide reductase subunit 1</fullName>
        <shortName>RNR1</shortName>
    </alternativeName>
</protein>
<evidence type="ECO:0000250" key="1">
    <source>
        <dbReference type="UniProtKB" id="P00452"/>
    </source>
</evidence>
<evidence type="ECO:0000250" key="2">
    <source>
        <dbReference type="UniProtKB" id="P12848"/>
    </source>
</evidence>
<evidence type="ECO:0000250" key="3">
    <source>
        <dbReference type="UniProtKB" id="P21524"/>
    </source>
</evidence>
<evidence type="ECO:0000250" key="4">
    <source>
        <dbReference type="UniProtKB" id="P23921"/>
    </source>
</evidence>
<evidence type="ECO:0000255" key="5">
    <source>
        <dbReference type="PROSITE-ProRule" id="PRU00492"/>
    </source>
</evidence>
<evidence type="ECO:0000305" key="6"/>
<name>RIR1_VACCC</name>
<accession>P20503</accession>
<dbReference type="EC" id="1.17.4.1"/>
<dbReference type="EMBL" id="M35027">
    <property type="protein sequence ID" value="AAA48059.1"/>
    <property type="molecule type" value="Genomic_DNA"/>
</dbReference>
<dbReference type="PIR" id="I42510">
    <property type="entry name" value="WMVZ9J"/>
</dbReference>
<dbReference type="SMR" id="P20503"/>
<dbReference type="Proteomes" id="UP000008269">
    <property type="component" value="Segment"/>
</dbReference>
<dbReference type="GO" id="GO:0005524">
    <property type="term" value="F:ATP binding"/>
    <property type="evidence" value="ECO:0007669"/>
    <property type="project" value="UniProtKB-KW"/>
</dbReference>
<dbReference type="GO" id="GO:0004748">
    <property type="term" value="F:ribonucleoside-diphosphate reductase activity, thioredoxin disulfide as acceptor"/>
    <property type="evidence" value="ECO:0007669"/>
    <property type="project" value="UniProtKB-EC"/>
</dbReference>
<dbReference type="GO" id="GO:0009263">
    <property type="term" value="P:deoxyribonucleotide biosynthetic process"/>
    <property type="evidence" value="ECO:0007669"/>
    <property type="project" value="UniProtKB-KW"/>
</dbReference>
<dbReference type="CDD" id="cd01679">
    <property type="entry name" value="RNR_I"/>
    <property type="match status" value="1"/>
</dbReference>
<dbReference type="FunFam" id="3.20.70.20:FF:000010">
    <property type="entry name" value="Ribonucleoside-diphosphate reductase"/>
    <property type="match status" value="1"/>
</dbReference>
<dbReference type="Gene3D" id="3.20.70.20">
    <property type="match status" value="1"/>
</dbReference>
<dbReference type="InterPro" id="IPR005144">
    <property type="entry name" value="ATP-cone_dom"/>
</dbReference>
<dbReference type="InterPro" id="IPR013346">
    <property type="entry name" value="NrdE_NrdA_C"/>
</dbReference>
<dbReference type="InterPro" id="IPR000788">
    <property type="entry name" value="RNR_lg_C"/>
</dbReference>
<dbReference type="InterPro" id="IPR013509">
    <property type="entry name" value="RNR_lsu_N"/>
</dbReference>
<dbReference type="InterPro" id="IPR008926">
    <property type="entry name" value="RNR_R1-su_N"/>
</dbReference>
<dbReference type="InterPro" id="IPR039718">
    <property type="entry name" value="Rrm1"/>
</dbReference>
<dbReference type="NCBIfam" id="TIGR02506">
    <property type="entry name" value="NrdE_NrdA"/>
    <property type="match status" value="1"/>
</dbReference>
<dbReference type="PANTHER" id="PTHR11573">
    <property type="entry name" value="RIBONUCLEOSIDE-DIPHOSPHATE REDUCTASE LARGE CHAIN"/>
    <property type="match status" value="1"/>
</dbReference>
<dbReference type="PANTHER" id="PTHR11573:SF6">
    <property type="entry name" value="RIBONUCLEOSIDE-DIPHOSPHATE REDUCTASE LARGE SUBUNIT"/>
    <property type="match status" value="1"/>
</dbReference>
<dbReference type="Pfam" id="PF03477">
    <property type="entry name" value="ATP-cone"/>
    <property type="match status" value="1"/>
</dbReference>
<dbReference type="Pfam" id="PF02867">
    <property type="entry name" value="Ribonuc_red_lgC"/>
    <property type="match status" value="1"/>
</dbReference>
<dbReference type="Pfam" id="PF00317">
    <property type="entry name" value="Ribonuc_red_lgN"/>
    <property type="match status" value="1"/>
</dbReference>
<dbReference type="PRINTS" id="PR01183">
    <property type="entry name" value="RIBORDTASEM1"/>
</dbReference>
<dbReference type="SUPFAM" id="SSF51998">
    <property type="entry name" value="PFL-like glycyl radical enzymes"/>
    <property type="match status" value="1"/>
</dbReference>
<dbReference type="SUPFAM" id="SSF48168">
    <property type="entry name" value="R1 subunit of ribonucleotide reductase, N-terminal domain"/>
    <property type="match status" value="1"/>
</dbReference>
<dbReference type="PROSITE" id="PS51161">
    <property type="entry name" value="ATP_CONE"/>
    <property type="match status" value="1"/>
</dbReference>
<dbReference type="PROSITE" id="PS00089">
    <property type="entry name" value="RIBORED_LARGE"/>
    <property type="match status" value="1"/>
</dbReference>
<comment type="function">
    <text evidence="2">Ribonucleoside-diphosphate reductase holoenzyme provides the precursors necessary for viral DNA synthesis. Allows virus growth in non-dividing cells. Catalyzes the biosynthesis of deoxyribonucleotides from the corresponding ribonucleotides.</text>
</comment>
<comment type="catalytic activity">
    <reaction evidence="2">
        <text>a 2'-deoxyribonucleoside 5'-diphosphate + [thioredoxin]-disulfide + H2O = a ribonucleoside 5'-diphosphate + [thioredoxin]-dithiol</text>
        <dbReference type="Rhea" id="RHEA:23252"/>
        <dbReference type="Rhea" id="RHEA-COMP:10698"/>
        <dbReference type="Rhea" id="RHEA-COMP:10700"/>
        <dbReference type="ChEBI" id="CHEBI:15377"/>
        <dbReference type="ChEBI" id="CHEBI:29950"/>
        <dbReference type="ChEBI" id="CHEBI:50058"/>
        <dbReference type="ChEBI" id="CHEBI:57930"/>
        <dbReference type="ChEBI" id="CHEBI:73316"/>
        <dbReference type="EC" id="1.17.4.1"/>
    </reaction>
    <physiologicalReaction direction="right-to-left" evidence="2">
        <dbReference type="Rhea" id="RHEA:23254"/>
    </physiologicalReaction>
</comment>
<comment type="cofactor">
    <cofactor evidence="2">
        <name>Mg(2+)</name>
        <dbReference type="ChEBI" id="CHEBI:18420"/>
    </cofactor>
    <text evidence="2">Maximal ribonucleotide reductase activity requires the presence of Mg(2+) ions.</text>
</comment>
<comment type="subunit">
    <text evidence="2">Interacts with RNR2/OPG047 subunit.</text>
</comment>
<comment type="induction">
    <text>Expressed early in the viral replicative cycle.</text>
</comment>
<comment type="similarity">
    <text evidence="6">Belongs to the ribonucleoside diphosphate reductase large chain family.</text>
</comment>
<organism>
    <name type="scientific">Vaccinia virus (strain Copenhagen)</name>
    <name type="common">VACV</name>
    <dbReference type="NCBI Taxonomy" id="10249"/>
    <lineage>
        <taxon>Viruses</taxon>
        <taxon>Varidnaviria</taxon>
        <taxon>Bamfordvirae</taxon>
        <taxon>Nucleocytoviricota</taxon>
        <taxon>Pokkesviricetes</taxon>
        <taxon>Chitovirales</taxon>
        <taxon>Poxviridae</taxon>
        <taxon>Chordopoxvirinae</taxon>
        <taxon>Orthopoxvirus</taxon>
        <taxon>Vaccinia virus</taxon>
    </lineage>
</organism>
<proteinExistence type="evidence at transcript level"/>
<keyword id="KW-0021">Allosteric enzyme</keyword>
<keyword id="KW-0067">ATP-binding</keyword>
<keyword id="KW-0215">Deoxyribonucleotide synthesis</keyword>
<keyword id="KW-0244">Early protein</keyword>
<keyword id="KW-0460">Magnesium</keyword>
<keyword id="KW-0547">Nucleotide-binding</keyword>
<keyword id="KW-0560">Oxidoreductase</keyword>
<keyword id="KW-1185">Reference proteome</keyword>
<gene>
    <name type="primary">OPG080</name>
    <name type="ORF">I4L</name>
</gene>
<sequence>MFVIKRNGYKENVMFDKITSRIRKLCYGLNTDHIDPIKIAMKVIQGIYNGVTTVELDTLAAEIAATCTTQHPDYAILAARIAVSNLHKETKKLFSEVMEDLFNYVNPKNGKHSPIISSITMDIVNKYKDKLNSVIIYERDFSYNYFGFKTLEKSYLLKINNKIVERPQHMLMRVAVGIHQWDIDSAIETYNLLSEKWFTHASPTLFNAGTSRHQMSSCFLLNMIDDSIEGIYDTLKRCALISKMAGGIGLSISNIRASGSYISGTNGISNGIIPMLRVYNNTARYIDQGGNKRPGVMAIYLEPWHSDIMAFLDLKKNTGNEEHRTRDLFIALWIPDLFMKRVKDDGEWSLMCPDECPGLDNVWGDEFERLYTLYERERRYKSIIKARVVWKAIIESQIETGTPFILYKDACNKKSNQQNLGTIKCSNLCTEIIQYADANEVAVCNLASVALNMFVIDGRFDFLKLKDVVKVIVRNLNKIIDINYYPIPEAEISNKRHRPIGIGVQGLADAFILLNYPFDSLEAQDLNKKIFETIYYGALEASCELAEKEGPYDTYVGSYASNGILQYDLWNVVPSDLWNWEPLKDKIRTYGLRNSLLVAPMPTASTAQILGNNESVEPYTSNIYTRRVLSGEFQVVNPHLLRVLTERKLWNDEIKNRIMADGGSIQNTNLPEDIKRVYKTIWEIPQKTIIKMAADRGAFIDQSQSMNIHIADPSYSKLTSMHFYGWSLGLKTGMYYLRTKPASAPIQFTLDKDKIKPLVVCDSEICTSCSG</sequence>